<organismHost>
    <name type="scientific">Microplitis demolitor</name>
    <name type="common">Parasitoid wasp</name>
    <dbReference type="NCBI Taxonomy" id="69319"/>
</organismHost>
<organism>
    <name type="scientific">Microplitis demolitor bracovirus (isolate Webb)</name>
    <name type="common">MdBV</name>
    <dbReference type="NCBI Taxonomy" id="654919"/>
    <lineage>
        <taxon>Viruses</taxon>
        <taxon>Viruses incertae sedis</taxon>
        <taxon>Polydnaviriformidae</taxon>
        <taxon>Bracoviriform</taxon>
        <taxon>Microplitis demolitor bracovirus</taxon>
    </lineage>
</organism>
<dbReference type="EMBL" id="AY875684">
    <property type="protein sequence ID" value="AAW51782.1"/>
    <property type="molecule type" value="Genomic_DNA"/>
</dbReference>
<dbReference type="RefSeq" id="YP_239380.1">
    <property type="nucleotide sequence ID" value="NC_007034.1"/>
</dbReference>
<dbReference type="SMR" id="Q5I148"/>
<dbReference type="KEGG" id="vg:5075815"/>
<dbReference type="Proteomes" id="UP000008168">
    <property type="component" value="Genome"/>
</dbReference>
<dbReference type="GO" id="GO:0051059">
    <property type="term" value="F:NF-kappaB binding"/>
    <property type="evidence" value="ECO:0007669"/>
    <property type="project" value="TreeGrafter"/>
</dbReference>
<dbReference type="GO" id="GO:0071356">
    <property type="term" value="P:cellular response to tumor necrosis factor"/>
    <property type="evidence" value="ECO:0007669"/>
    <property type="project" value="TreeGrafter"/>
</dbReference>
<dbReference type="GO" id="GO:0085034">
    <property type="term" value="P:symbiont-mediated suppression of host NF-kappaB cascade"/>
    <property type="evidence" value="ECO:0007669"/>
    <property type="project" value="UniProtKB-KW"/>
</dbReference>
<dbReference type="Gene3D" id="1.25.40.20">
    <property type="entry name" value="Ankyrin repeat-containing domain"/>
    <property type="match status" value="1"/>
</dbReference>
<dbReference type="InterPro" id="IPR002110">
    <property type="entry name" value="Ankyrin_rpt"/>
</dbReference>
<dbReference type="InterPro" id="IPR036770">
    <property type="entry name" value="Ankyrin_rpt-contain_sf"/>
</dbReference>
<dbReference type="InterPro" id="IPR051070">
    <property type="entry name" value="NF-kappa-B_inhibitor"/>
</dbReference>
<dbReference type="PANTHER" id="PTHR46680">
    <property type="entry name" value="NF-KAPPA-B INHIBITOR ALPHA"/>
    <property type="match status" value="1"/>
</dbReference>
<dbReference type="PANTHER" id="PTHR46680:SF3">
    <property type="entry name" value="NF-KAPPA-B INHIBITOR CACTUS"/>
    <property type="match status" value="1"/>
</dbReference>
<dbReference type="Pfam" id="PF13637">
    <property type="entry name" value="Ank_4"/>
    <property type="match status" value="1"/>
</dbReference>
<dbReference type="SMART" id="SM00248">
    <property type="entry name" value="ANK"/>
    <property type="match status" value="2"/>
</dbReference>
<dbReference type="SUPFAM" id="SSF48403">
    <property type="entry name" value="Ankyrin repeat"/>
    <property type="match status" value="1"/>
</dbReference>
<dbReference type="PROSITE" id="PS50297">
    <property type="entry name" value="ANK_REP_REGION"/>
    <property type="match status" value="1"/>
</dbReference>
<dbReference type="PROSITE" id="PS50088">
    <property type="entry name" value="ANK_REPEAT"/>
    <property type="match status" value="1"/>
</dbReference>
<name>IKBG2_MDBVW</name>
<proteinExistence type="inferred from homology"/>
<accession>Q5I148</accession>
<reference key="1">
    <citation type="journal article" date="2006" name="Virology">
        <title>Polydnavirus genomes reflect their dual roles as mutualists and pathogens.</title>
        <authorList>
            <person name="Webb B.A."/>
            <person name="Strand M.R."/>
            <person name="Dickey S.E."/>
            <person name="Beck M.H."/>
            <person name="Hilgarth R.S."/>
            <person name="Barney W.E."/>
            <person name="Kadash K."/>
            <person name="Kroemer J.A."/>
            <person name="Lindstrom K.G."/>
            <person name="Rattanadechakul W."/>
            <person name="Shelby K.S."/>
            <person name="Thoetkiattikul H."/>
            <person name="Turnbull M.W."/>
            <person name="Witherell R.A."/>
        </authorList>
    </citation>
    <scope>NUCLEOTIDE SEQUENCE [GENOMIC RNA]</scope>
</reference>
<reference key="2">
    <citation type="journal article" date="2005" name="Proc. Natl. Acad. Sci. U.S.A.">
        <title>Inhibitor kappaB-like proteins from a polydnavirus inhibit NF-kappaB activation and suppress the insect immune response.</title>
        <authorList>
            <person name="Thoetkiattikul H."/>
            <person name="Beck M.H."/>
            <person name="Strand M.R."/>
        </authorList>
    </citation>
    <scope>NUCLEOTIDE SEQUENCE [GENOMIC RNA]</scope>
</reference>
<comment type="function">
    <text evidence="1">Suppresses the host immune response through NF-kappa-B inactivation. Possesses ankyrin repeat domains required for NF-kappa-B binding but lacks the regulatory regions required for dissociation from NF-kappa-B and degradation. Therefore, prevents host NF-kappa-B release and subsequent activation (By similarity).</text>
</comment>
<comment type="similarity">
    <text evidence="2">Belongs to the polydnaviridae I-Kappa-B-like protein family.</text>
</comment>
<sequence>MLAKSGFKIVLNGCLNDRGDNLAHYFSRQGDVIDLIALKEVINDDNRHLLLDYNFSQRQCVHIVVCEDKVNAIKKLKVLLEMGADINGQERKGGNTPLHLAVHSNNYKLVKWLCKQPSINKTALNYAQKTPHDIAIERIEKKINNALMEQKKWYKIMHPSGADLSEEE</sequence>
<gene>
    <name type="primary">G4</name>
</gene>
<evidence type="ECO:0000250" key="1"/>
<evidence type="ECO:0000305" key="2"/>
<protein>
    <recommendedName>
        <fullName>I-Kappa-B like protein G2</fullName>
    </recommendedName>
</protein>
<feature type="chain" id="PRO_0000405364" description="I-Kappa-B like protein G2">
    <location>
        <begin position="1"/>
        <end position="168"/>
    </location>
</feature>
<feature type="repeat" description="ANK 1">
    <location>
        <begin position="56"/>
        <end position="88"/>
    </location>
</feature>
<feature type="repeat" description="ANK 2">
    <location>
        <begin position="93"/>
        <end position="123"/>
    </location>
</feature>
<keyword id="KW-0040">ANK repeat</keyword>
<keyword id="KW-0945">Host-virus interaction</keyword>
<keyword id="KW-1100">Inhibition of host NF-kappa-B by virus</keyword>
<keyword id="KW-1185">Reference proteome</keyword>
<keyword id="KW-0677">Repeat</keyword>